<name>KR191_HUMAN</name>
<comment type="function">
    <text>In the hair cortex, hair keratin intermediate filaments are embedded in an interfilamentous matrix, consisting of hair keratin-associated proteins (KRTAP), which are essential for the formation of a rigid and resistant hair shaft through their extensive disulfide bond cross-linking with abundant cysteine residues of hair keratins. The matrix proteins include the high-sulfur and high-glycine-tyrosine keratins.</text>
</comment>
<comment type="subunit">
    <text>Interacts with hair keratins.</text>
</comment>
<comment type="interaction">
    <interactant intactId="EBI-12811111">
        <id>Q8IUB9</id>
    </interactant>
    <interactant intactId="EBI-21535880">
        <id>Q92870-2</id>
        <label>APBB2</label>
    </interactant>
    <organismsDiffer>false</organismsDiffer>
    <experiments>3</experiments>
</comment>
<comment type="interaction">
    <interactant intactId="EBI-12811111">
        <id>Q8IUB9</id>
    </interactant>
    <interactant intactId="EBI-12006308">
        <id>Q7Z3C6-3</id>
        <label>ATG9A</label>
    </interactant>
    <organismsDiffer>false</organismsDiffer>
    <experiments>3</experiments>
</comment>
<comment type="interaction">
    <interactant intactId="EBI-12811111">
        <id>Q8IUB9</id>
    </interactant>
    <interactant intactId="EBI-930964">
        <id>P54253</id>
        <label>ATXN1</label>
    </interactant>
    <organismsDiffer>false</organismsDiffer>
    <experiments>3</experiments>
</comment>
<comment type="interaction">
    <interactant intactId="EBI-12811111">
        <id>Q8IUB9</id>
    </interactant>
    <interactant intactId="EBI-742750">
        <id>Q8TBE0</id>
        <label>BAHD1</label>
    </interactant>
    <organismsDiffer>false</organismsDiffer>
    <experiments>3</experiments>
</comment>
<comment type="interaction">
    <interactant intactId="EBI-12811111">
        <id>Q8IUB9</id>
    </interactant>
    <interactant intactId="EBI-765407">
        <id>P41182</id>
        <label>BCL6</label>
    </interactant>
    <organismsDiffer>false</organismsDiffer>
    <experiments>3</experiments>
</comment>
<comment type="interaction">
    <interactant intactId="EBI-12811111">
        <id>Q8IUB9</id>
    </interactant>
    <interactant intactId="EBI-711810">
        <id>O14503</id>
        <label>BHLHE40</label>
    </interactant>
    <organismsDiffer>false</organismsDiffer>
    <experiments>3</experiments>
</comment>
<comment type="interaction">
    <interactant intactId="EBI-12811111">
        <id>Q8IUB9</id>
    </interactant>
    <interactant intactId="EBI-6660291">
        <id>Q6NUJ2</id>
        <label>C11orf87</label>
    </interactant>
    <organismsDiffer>false</organismsDiffer>
    <experiments>3</experiments>
</comment>
<comment type="interaction">
    <interactant intactId="EBI-12811111">
        <id>Q8IUB9</id>
    </interactant>
    <interactant intactId="EBI-744556">
        <id>Q96HB5</id>
        <label>CCDC120</label>
    </interactant>
    <organismsDiffer>false</organismsDiffer>
    <experiments>3</experiments>
</comment>
<comment type="interaction">
    <interactant intactId="EBI-12811111">
        <id>Q8IUB9</id>
    </interactant>
    <interactant intactId="EBI-1104933">
        <id>Q8N4L8</id>
        <label>CCDC24</label>
    </interactant>
    <organismsDiffer>false</organismsDiffer>
    <experiments>5</experiments>
</comment>
<comment type="interaction">
    <interactant intactId="EBI-12811111">
        <id>Q8IUB9</id>
    </interactant>
    <interactant intactId="EBI-10274247">
        <id>Q8TCT0</id>
        <label>CERK</label>
    </interactant>
    <organismsDiffer>false</organismsDiffer>
    <experiments>3</experiments>
</comment>
<comment type="interaction">
    <interactant intactId="EBI-12811111">
        <id>Q8IUB9</id>
    </interactant>
    <interactant intactId="EBI-3867333">
        <id>A8MQ03</id>
        <label>CYSRT1</label>
    </interactant>
    <organismsDiffer>false</organismsDiffer>
    <experiments>3</experiments>
</comment>
<comment type="interaction">
    <interactant intactId="EBI-12811111">
        <id>Q8IUB9</id>
    </interactant>
    <interactant intactId="EBI-724310">
        <id>Q15038</id>
        <label>DAZAP2</label>
    </interactant>
    <organismsDiffer>false</organismsDiffer>
    <experiments>3</experiments>
</comment>
<comment type="interaction">
    <interactant intactId="EBI-12811111">
        <id>Q8IUB9</id>
    </interactant>
    <interactant intactId="EBI-10968534">
        <id>P50570-2</id>
        <label>DNM2</label>
    </interactant>
    <organismsDiffer>false</organismsDiffer>
    <experiments>3</experiments>
</comment>
<comment type="interaction">
    <interactant intactId="EBI-12811111">
        <id>Q8IUB9</id>
    </interactant>
    <interactant intactId="EBI-740376">
        <id>Q86UW9</id>
        <label>DTX2</label>
    </interactant>
    <organismsDiffer>false</organismsDiffer>
    <experiments>3</experiments>
</comment>
<comment type="interaction">
    <interactant intactId="EBI-12811111">
        <id>Q8IUB9</id>
    </interactant>
    <interactant intactId="EBI-744099">
        <id>Q9H0I2</id>
        <label>ENKD1</label>
    </interactant>
    <organismsDiffer>false</organismsDiffer>
    <experiments>3</experiments>
</comment>
<comment type="interaction">
    <interactant intactId="EBI-12811111">
        <id>Q8IUB9</id>
    </interactant>
    <interactant intactId="EBI-11978259">
        <id>Q92567-2</id>
        <label>FAM168A</label>
    </interactant>
    <organismsDiffer>false</organismsDiffer>
    <experiments>3</experiments>
</comment>
<comment type="interaction">
    <interactant intactId="EBI-12811111">
        <id>Q8IUB9</id>
    </interactant>
    <interactant intactId="EBI-12018822">
        <id>Q12951-2</id>
        <label>FOXI1</label>
    </interactant>
    <organismsDiffer>false</organismsDiffer>
    <experiments>3</experiments>
</comment>
<comment type="interaction">
    <interactant intactId="EBI-12811111">
        <id>Q8IUB9</id>
    </interactant>
    <interactant intactId="EBI-10329202">
        <id>Q9Y5R4</id>
        <label>HEMK1</label>
    </interactant>
    <organismsDiffer>false</organismsDiffer>
    <experiments>3</experiments>
</comment>
<comment type="interaction">
    <interactant intactId="EBI-12811111">
        <id>Q8IUB9</id>
    </interactant>
    <interactant intactId="EBI-747421">
        <id>Q03014</id>
        <label>HHEX</label>
    </interactant>
    <organismsDiffer>false</organismsDiffer>
    <experiments>3</experiments>
</comment>
<comment type="interaction">
    <interactant intactId="EBI-12811111">
        <id>Q8IUB9</id>
    </interactant>
    <interactant intactId="EBI-6509505">
        <id>Q0VD86</id>
        <label>INCA1</label>
    </interactant>
    <organismsDiffer>false</organismsDiffer>
    <experiments>3</experiments>
</comment>
<comment type="interaction">
    <interactant intactId="EBI-12811111">
        <id>Q8IUB9</id>
    </interactant>
    <interactant intactId="EBI-715611">
        <id>Q9C086</id>
        <label>INO80B</label>
    </interactant>
    <organismsDiffer>false</organismsDiffer>
    <experiments>3</experiments>
</comment>
<comment type="interaction">
    <interactant intactId="EBI-12811111">
        <id>Q8IUB9</id>
    </interactant>
    <interactant intactId="EBI-10981970">
        <id>Q5T749</id>
        <label>KPRP</label>
    </interactant>
    <organismsDiffer>false</organismsDiffer>
    <experiments>3</experiments>
</comment>
<comment type="interaction">
    <interactant intactId="EBI-12811111">
        <id>Q8IUB9</id>
    </interactant>
    <interactant intactId="EBI-11992140">
        <id>Q3LI76</id>
        <label>KRTAP15-1</label>
    </interactant>
    <organismsDiffer>false</organismsDiffer>
    <experiments>3</experiments>
</comment>
<comment type="interaction">
    <interactant intactId="EBI-12811111">
        <id>Q8IUB9</id>
    </interactant>
    <interactant intactId="EBI-11022007">
        <id>Q9HBE1-4</id>
        <label>PATZ1</label>
    </interactant>
    <organismsDiffer>false</organismsDiffer>
    <experiments>3</experiments>
</comment>
<comment type="interaction">
    <interactant intactId="EBI-12811111">
        <id>Q8IUB9</id>
    </interactant>
    <interactant intactId="EBI-724639">
        <id>Q9UBV8</id>
        <label>PEF1</label>
    </interactant>
    <organismsDiffer>false</organismsDiffer>
    <experiments>3</experiments>
</comment>
<comment type="interaction">
    <interactant intactId="EBI-12811111">
        <id>Q8IUB9</id>
    </interactant>
    <interactant intactId="EBI-752057">
        <id>Q7Z412</id>
        <label>PEX26</label>
    </interactant>
    <organismsDiffer>false</organismsDiffer>
    <experiments>3</experiments>
</comment>
<comment type="interaction">
    <interactant intactId="EBI-12811111">
        <id>Q8IUB9</id>
    </interactant>
    <interactant intactId="EBI-769257">
        <id>Q9NRQ2</id>
        <label>PLSCR4</label>
    </interactant>
    <organismsDiffer>false</organismsDiffer>
    <experiments>3</experiments>
</comment>
<comment type="interaction">
    <interactant intactId="EBI-12811111">
        <id>Q8IUB9</id>
    </interactant>
    <interactant intactId="EBI-50433196">
        <id>A0A6Q8PF08</id>
        <label>PMP22</label>
    </interactant>
    <organismsDiffer>false</organismsDiffer>
    <experiments>3</experiments>
</comment>
<comment type="interaction">
    <interactant intactId="EBI-12811111">
        <id>Q8IUB9</id>
    </interactant>
    <interactant intactId="EBI-9027467">
        <id>O75360</id>
        <label>PROP1</label>
    </interactant>
    <organismsDiffer>false</organismsDiffer>
    <experiments>3</experiments>
</comment>
<comment type="interaction">
    <interactant intactId="EBI-12811111">
        <id>Q8IUB9</id>
    </interactant>
    <interactant intactId="EBI-12754095">
        <id>P86480</id>
        <label>PRR20D</label>
    </interactant>
    <organismsDiffer>false</organismsDiffer>
    <experiments>3</experiments>
</comment>
<comment type="interaction">
    <interactant intactId="EBI-12811111">
        <id>Q8IUB9</id>
    </interactant>
    <interactant intactId="EBI-372273">
        <id>P20618</id>
        <label>PSMB1</label>
    </interactant>
    <organismsDiffer>false</organismsDiffer>
    <experiments>3</experiments>
</comment>
<comment type="interaction">
    <interactant intactId="EBI-12811111">
        <id>Q8IUB9</id>
    </interactant>
    <interactant intactId="EBI-359335">
        <id>P49721</id>
        <label>PSMB2</label>
    </interactant>
    <organismsDiffer>false</organismsDiffer>
    <experiments>3</experiments>
</comment>
<comment type="interaction">
    <interactant intactId="EBI-12811111">
        <id>Q8IUB9</id>
    </interactant>
    <interactant intactId="EBI-740343">
        <id>Q93062-3</id>
        <label>RBPMS</label>
    </interactant>
    <organismsDiffer>false</organismsDiffer>
    <experiments>3</experiments>
</comment>
<comment type="interaction">
    <interactant intactId="EBI-12811111">
        <id>Q8IUB9</id>
    </interactant>
    <interactant intactId="EBI-12006870">
        <id>Q9H310-3</id>
        <label>RHBG</label>
    </interactant>
    <organismsDiffer>false</organismsDiffer>
    <experiments>3</experiments>
</comment>
<comment type="interaction">
    <interactant intactId="EBI-12811111">
        <id>Q8IUB9</id>
    </interactant>
    <interactant intactId="EBI-2845060">
        <id>Q7L0R7</id>
        <label>RNF44</label>
    </interactant>
    <organismsDiffer>false</organismsDiffer>
    <experiments>3</experiments>
</comment>
<comment type="interaction">
    <interactant intactId="EBI-12811111">
        <id>Q8IUB9</id>
    </interactant>
    <interactant intactId="EBI-6257312">
        <id>Q9BVN2</id>
        <label>RUSC1</label>
    </interactant>
    <organismsDiffer>false</organismsDiffer>
    <experiments>3</experiments>
</comment>
<comment type="interaction">
    <interactant intactId="EBI-12811111">
        <id>Q8IUB9</id>
    </interactant>
    <interactant intactId="EBI-395421">
        <id>Q16637</id>
        <label>SMN2</label>
    </interactant>
    <organismsDiffer>false</organismsDiffer>
    <experiments>3</experiments>
</comment>
<comment type="interaction">
    <interactant intactId="EBI-12811111">
        <id>Q8IUB9</id>
    </interactant>
    <interactant intactId="EBI-372475">
        <id>P14678-2</id>
        <label>SNRPB</label>
    </interactant>
    <organismsDiffer>false</organismsDiffer>
    <experiments>3</experiments>
</comment>
<comment type="interaction">
    <interactant intactId="EBI-12811111">
        <id>Q8IUB9</id>
    </interactant>
    <interactant intactId="EBI-750487">
        <id>Q8WW24</id>
        <label>TEKT4</label>
    </interactant>
    <organismsDiffer>false</organismsDiffer>
    <experiments>5</experiments>
</comment>
<comment type="interaction">
    <interactant intactId="EBI-12811111">
        <id>Q8IUB9</id>
    </interactant>
    <interactant intactId="EBI-3939165">
        <id>O43711</id>
        <label>TLX3</label>
    </interactant>
    <organismsDiffer>false</organismsDiffer>
    <experiments>3</experiments>
</comment>
<comment type="interaction">
    <interactant intactId="EBI-12811111">
        <id>Q8IUB9</id>
    </interactant>
    <interactant intactId="EBI-25847109">
        <id>O14656-2</id>
        <label>TOR1A</label>
    </interactant>
    <organismsDiffer>false</organismsDiffer>
    <experiments>3</experiments>
</comment>
<comment type="interaction">
    <interactant intactId="EBI-12811111">
        <id>Q8IUB9</id>
    </interactant>
    <interactant intactId="EBI-10191303">
        <id>O95231</id>
        <label>VENTX</label>
    </interactant>
    <organismsDiffer>false</organismsDiffer>
    <experiments>5</experiments>
</comment>
<comment type="interaction">
    <interactant intactId="EBI-12811111">
        <id>Q8IUB9</id>
    </interactant>
    <interactant intactId="EBI-11957216">
        <id>A8MV65-2</id>
        <label>VGLL3</label>
    </interactant>
    <organismsDiffer>false</organismsDiffer>
    <experiments>3</experiments>
</comment>
<comment type="interaction">
    <interactant intactId="EBI-12811111">
        <id>Q8IUB9</id>
    </interactant>
    <interactant intactId="EBI-742550">
        <id>Q96K80</id>
        <label>ZC3H10</label>
    </interactant>
    <organismsDiffer>false</organismsDiffer>
    <experiments>3</experiments>
</comment>
<comment type="interaction">
    <interactant intactId="EBI-12811111">
        <id>Q8IUB9</id>
    </interactant>
    <interactant intactId="EBI-11963196">
        <id>Q15915</id>
        <label>ZIC1</label>
    </interactant>
    <organismsDiffer>false</organismsDiffer>
    <experiments>3</experiments>
</comment>
<comment type="interaction">
    <interactant intactId="EBI-12811111">
        <id>Q8IUB9</id>
    </interactant>
    <interactant intactId="EBI-744257">
        <id>Q96IQ9</id>
        <label>ZNF414</label>
    </interactant>
    <organismsDiffer>false</organismsDiffer>
    <experiments>3</experiments>
</comment>
<comment type="interaction">
    <interactant intactId="EBI-12811111">
        <id>Q8IUB9</id>
    </interactant>
    <interactant intactId="EBI-8832437">
        <id>Q96F45</id>
        <label>ZNF503</label>
    </interactant>
    <organismsDiffer>false</organismsDiffer>
    <experiments>3</experiments>
</comment>
<comment type="interaction">
    <interactant intactId="EBI-12811111">
        <id>Q8IUB9</id>
    </interactant>
    <interactant intactId="EBI-750454">
        <id>Q96EJ4</id>
    </interactant>
    <organismsDiffer>false</organismsDiffer>
    <experiments>3</experiments>
</comment>
<comment type="tissue specificity">
    <text>Detected in the upper portion of the hair cortex.</text>
</comment>
<comment type="similarity">
    <text evidence="1">Belongs to the KRTAP type 19 family.</text>
</comment>
<organism>
    <name type="scientific">Homo sapiens</name>
    <name type="common">Human</name>
    <dbReference type="NCBI Taxonomy" id="9606"/>
    <lineage>
        <taxon>Eukaryota</taxon>
        <taxon>Metazoa</taxon>
        <taxon>Chordata</taxon>
        <taxon>Craniata</taxon>
        <taxon>Vertebrata</taxon>
        <taxon>Euteleostomi</taxon>
        <taxon>Mammalia</taxon>
        <taxon>Eutheria</taxon>
        <taxon>Euarchontoglires</taxon>
        <taxon>Primates</taxon>
        <taxon>Haplorrhini</taxon>
        <taxon>Catarrhini</taxon>
        <taxon>Hominidae</taxon>
        <taxon>Homo</taxon>
    </lineage>
</organism>
<accession>Q8IUB9</accession>
<accession>A4QN27</accession>
<accession>Q3LI75</accession>
<gene>
    <name type="primary">KRTAP19-1</name>
    <name type="synonym">KAP19.1</name>
    <name type="synonym">KRTAP19.1</name>
</gene>
<protein>
    <recommendedName>
        <fullName>Keratin-associated protein 19-1</fullName>
    </recommendedName>
    <alternativeName>
        <fullName>High tyrosine-glycine keratin-associated protein 19.1</fullName>
    </alternativeName>
</protein>
<reference key="1">
    <citation type="submission" date="2002-11" db="EMBL/GenBank/DDBJ databases">
        <title>Identification of complete keratin-associated protein (KAP) gene cluster spanning 800 kb region on human chromosome 21q22.11.</title>
        <authorList>
            <person name="Obayashi I."/>
            <person name="Shibuya K."/>
            <person name="Minoshima S."/>
            <person name="Kudoh J."/>
            <person name="Shimizu N."/>
        </authorList>
    </citation>
    <scope>NUCLEOTIDE SEQUENCE [MRNA]</scope>
    <source>
        <tissue>Hair root</tissue>
    </source>
</reference>
<reference key="2">
    <citation type="journal article" date="2000" name="Nature">
        <title>The DNA sequence of human chromosome 21.</title>
        <authorList>
            <person name="Hattori M."/>
            <person name="Fujiyama A."/>
            <person name="Taylor T.D."/>
            <person name="Watanabe H."/>
            <person name="Yada T."/>
            <person name="Park H.-S."/>
            <person name="Toyoda A."/>
            <person name="Ishii K."/>
            <person name="Totoki Y."/>
            <person name="Choi D.-K."/>
            <person name="Groner Y."/>
            <person name="Soeda E."/>
            <person name="Ohki M."/>
            <person name="Takagi T."/>
            <person name="Sakaki Y."/>
            <person name="Taudien S."/>
            <person name="Blechschmidt K."/>
            <person name="Polley A."/>
            <person name="Menzel U."/>
            <person name="Delabar J."/>
            <person name="Kumpf K."/>
            <person name="Lehmann R."/>
            <person name="Patterson D."/>
            <person name="Reichwald K."/>
            <person name="Rump A."/>
            <person name="Schillhabel M."/>
            <person name="Schudy A."/>
            <person name="Zimmermann W."/>
            <person name="Rosenthal A."/>
            <person name="Kudoh J."/>
            <person name="Shibuya K."/>
            <person name="Kawasaki K."/>
            <person name="Asakawa S."/>
            <person name="Shintani A."/>
            <person name="Sasaki T."/>
            <person name="Nagamine K."/>
            <person name="Mitsuyama S."/>
            <person name="Antonarakis S.E."/>
            <person name="Minoshima S."/>
            <person name="Shimizu N."/>
            <person name="Nordsiek G."/>
            <person name="Hornischer K."/>
            <person name="Brandt P."/>
            <person name="Scharfe M."/>
            <person name="Schoen O."/>
            <person name="Desario A."/>
            <person name="Reichelt J."/>
            <person name="Kauer G."/>
            <person name="Bloecker H."/>
            <person name="Ramser J."/>
            <person name="Beck A."/>
            <person name="Klages S."/>
            <person name="Hennig S."/>
            <person name="Riesselmann L."/>
            <person name="Dagand E."/>
            <person name="Wehrmeyer S."/>
            <person name="Borzym K."/>
            <person name="Gardiner K."/>
            <person name="Nizetic D."/>
            <person name="Francis F."/>
            <person name="Lehrach H."/>
            <person name="Reinhardt R."/>
            <person name="Yaspo M.-L."/>
        </authorList>
    </citation>
    <scope>NUCLEOTIDE SEQUENCE [LARGE SCALE GENOMIC DNA]</scope>
</reference>
<reference key="3">
    <citation type="submission" date="2005-09" db="EMBL/GenBank/DDBJ databases">
        <authorList>
            <person name="Mural R.J."/>
            <person name="Istrail S."/>
            <person name="Sutton G.G."/>
            <person name="Florea L."/>
            <person name="Halpern A.L."/>
            <person name="Mobarry C.M."/>
            <person name="Lippert R."/>
            <person name="Walenz B."/>
            <person name="Shatkay H."/>
            <person name="Dew I."/>
            <person name="Miller J.R."/>
            <person name="Flanigan M.J."/>
            <person name="Edwards N.J."/>
            <person name="Bolanos R."/>
            <person name="Fasulo D."/>
            <person name="Halldorsson B.V."/>
            <person name="Hannenhalli S."/>
            <person name="Turner R."/>
            <person name="Yooseph S."/>
            <person name="Lu F."/>
            <person name="Nusskern D.R."/>
            <person name="Shue B.C."/>
            <person name="Zheng X.H."/>
            <person name="Zhong F."/>
            <person name="Delcher A.L."/>
            <person name="Huson D.H."/>
            <person name="Kravitz S.A."/>
            <person name="Mouchard L."/>
            <person name="Reinert K."/>
            <person name="Remington K.A."/>
            <person name="Clark A.G."/>
            <person name="Waterman M.S."/>
            <person name="Eichler E.E."/>
            <person name="Adams M.D."/>
            <person name="Hunkapiller M.W."/>
            <person name="Myers E.W."/>
            <person name="Venter J.C."/>
        </authorList>
    </citation>
    <scope>NUCLEOTIDE SEQUENCE [LARGE SCALE GENOMIC DNA]</scope>
</reference>
<reference key="4">
    <citation type="journal article" date="2004" name="Genome Res.">
        <title>The status, quality, and expansion of the NIH full-length cDNA project: the Mammalian Gene Collection (MGC).</title>
        <authorList>
            <consortium name="The MGC Project Team"/>
        </authorList>
    </citation>
    <scope>NUCLEOTIDE SEQUENCE [LARGE SCALE MRNA]</scope>
</reference>
<reference key="5">
    <citation type="journal article" date="2002" name="J. Biol. Chem.">
        <title>Characterization of a first domain of human high glycine-tyrosine and high sulfur keratin-associated protein (KAP) genes on chromosome 21q22.1.</title>
        <authorList>
            <person name="Rogers M.A."/>
            <person name="Langbein L."/>
            <person name="Winter H."/>
            <person name="Ehmann C."/>
            <person name="Praetzel S."/>
            <person name="Schweizer J."/>
        </authorList>
    </citation>
    <scope>NUCLEOTIDE SEQUENCE [MRNA] OF 3-90</scope>
    <source>
        <tissue>Scalp</tissue>
    </source>
</reference>
<feature type="chain" id="PRO_0000185221" description="Keratin-associated protein 19-1">
    <location>
        <begin position="1"/>
        <end position="90"/>
    </location>
</feature>
<feature type="region of interest" description="26 X 2 AA repeats of G-[YCGS]">
    <location>
        <begin position="5"/>
        <end position="84"/>
    </location>
</feature>
<proteinExistence type="evidence at protein level"/>
<evidence type="ECO:0000305" key="1"/>
<sequence length="90" mass="9008">MSHYGSYYGGLGYSCGGFGGLGYGYGCGCGSFCRRGSGCGYGGYGYGSGFGSYGYGSGFGGYGYGSGFGGYGYGCCRPSYNGGYGFSGFY</sequence>
<dbReference type="EMBL" id="AB096943">
    <property type="protein sequence ID" value="BAE46358.1"/>
    <property type="molecule type" value="mRNA"/>
</dbReference>
<dbReference type="EMBL" id="AP000567">
    <property type="status" value="NOT_ANNOTATED_CDS"/>
    <property type="molecule type" value="Genomic_DNA"/>
</dbReference>
<dbReference type="EMBL" id="CH471079">
    <property type="protein sequence ID" value="EAX09898.1"/>
    <property type="molecule type" value="Genomic_DNA"/>
</dbReference>
<dbReference type="EMBL" id="BC126284">
    <property type="protein sequence ID" value="AAI26285.1"/>
    <property type="molecule type" value="mRNA"/>
</dbReference>
<dbReference type="EMBL" id="BC126286">
    <property type="protein sequence ID" value="AAI26287.1"/>
    <property type="molecule type" value="mRNA"/>
</dbReference>
<dbReference type="EMBL" id="AJ457067">
    <property type="protein sequence ID" value="CAD29723.1"/>
    <property type="molecule type" value="mRNA"/>
</dbReference>
<dbReference type="CCDS" id="CCDS13594.1"/>
<dbReference type="RefSeq" id="NP_853638.1">
    <property type="nucleotide sequence ID" value="NM_181607.3"/>
</dbReference>
<dbReference type="BioGRID" id="130627">
    <property type="interactions" value="46"/>
</dbReference>
<dbReference type="FunCoup" id="Q8IUB9">
    <property type="interactions" value="17"/>
</dbReference>
<dbReference type="IntAct" id="Q8IUB9">
    <property type="interactions" value="48"/>
</dbReference>
<dbReference type="STRING" id="9606.ENSP00000375108"/>
<dbReference type="GlyGen" id="Q8IUB9">
    <property type="glycosylation" value="2 sites, 1 O-linked glycan (2 sites)"/>
</dbReference>
<dbReference type="BioMuta" id="KRTAP19-1"/>
<dbReference type="DMDM" id="88984327"/>
<dbReference type="MassIVE" id="Q8IUB9"/>
<dbReference type="PaxDb" id="9606-ENSP00000375108"/>
<dbReference type="PeptideAtlas" id="Q8IUB9"/>
<dbReference type="ProteomicsDB" id="70538"/>
<dbReference type="Antibodypedia" id="81634">
    <property type="antibodies" value="1 antibodies from 1 providers"/>
</dbReference>
<dbReference type="DNASU" id="337882"/>
<dbReference type="Ensembl" id="ENST00000390689.3">
    <property type="protein sequence ID" value="ENSP00000375108.2"/>
    <property type="gene ID" value="ENSG00000184351.8"/>
</dbReference>
<dbReference type="GeneID" id="337882"/>
<dbReference type="KEGG" id="hsa:337882"/>
<dbReference type="MANE-Select" id="ENST00000390689.3">
    <property type="protein sequence ID" value="ENSP00000375108.2"/>
    <property type="RefSeq nucleotide sequence ID" value="NM_181607.3"/>
    <property type="RefSeq protein sequence ID" value="NP_853638.1"/>
</dbReference>
<dbReference type="UCSC" id="uc011acx.3">
    <property type="organism name" value="human"/>
</dbReference>
<dbReference type="AGR" id="HGNC:18936"/>
<dbReference type="CTD" id="337882"/>
<dbReference type="GeneCards" id="KRTAP19-1"/>
<dbReference type="HGNC" id="HGNC:18936">
    <property type="gene designation" value="KRTAP19-1"/>
</dbReference>
<dbReference type="HPA" id="ENSG00000184351">
    <property type="expression patterns" value="Tissue enriched (skin)"/>
</dbReference>
<dbReference type="neXtProt" id="NX_Q8IUB9"/>
<dbReference type="OpenTargets" id="ENSG00000184351"/>
<dbReference type="PharmGKB" id="PA134956142"/>
<dbReference type="VEuPathDB" id="HostDB:ENSG00000184351"/>
<dbReference type="eggNOG" id="ENOG502TDP7">
    <property type="taxonomic scope" value="Eukaryota"/>
</dbReference>
<dbReference type="GeneTree" id="ENSGT00950000183970"/>
<dbReference type="HOGENOM" id="CLU_184630_0_0_1"/>
<dbReference type="InParanoid" id="Q8IUB9"/>
<dbReference type="OMA" id="YSTSCKG"/>
<dbReference type="PAN-GO" id="Q8IUB9">
    <property type="GO annotations" value="0 GO annotations based on evolutionary models"/>
</dbReference>
<dbReference type="PathwayCommons" id="Q8IUB9"/>
<dbReference type="Reactome" id="R-HSA-6805567">
    <property type="pathway name" value="Keratinization"/>
</dbReference>
<dbReference type="SignaLink" id="Q8IUB9"/>
<dbReference type="BioGRID-ORCS" id="337882">
    <property type="hits" value="6 hits in 1112 CRISPR screens"/>
</dbReference>
<dbReference type="GenomeRNAi" id="337882"/>
<dbReference type="Pharos" id="Q8IUB9">
    <property type="development level" value="Tdark"/>
</dbReference>
<dbReference type="PRO" id="PR:Q8IUB9"/>
<dbReference type="Proteomes" id="UP000005640">
    <property type="component" value="Chromosome 21"/>
</dbReference>
<dbReference type="RNAct" id="Q8IUB9">
    <property type="molecule type" value="protein"/>
</dbReference>
<dbReference type="Bgee" id="ENSG00000184351">
    <property type="expression patterns" value="Expressed in amniotic fluid and 14 other cell types or tissues"/>
</dbReference>
<dbReference type="GO" id="GO:0005829">
    <property type="term" value="C:cytosol"/>
    <property type="evidence" value="ECO:0000304"/>
    <property type="project" value="Reactome"/>
</dbReference>
<dbReference type="GO" id="GO:0005882">
    <property type="term" value="C:intermediate filament"/>
    <property type="evidence" value="ECO:0007669"/>
    <property type="project" value="UniProtKB-KW"/>
</dbReference>
<dbReference type="InterPro" id="IPR021743">
    <property type="entry name" value="KRTAP_type8/19/20/21/22"/>
</dbReference>
<dbReference type="InterPro" id="IPR051528">
    <property type="entry name" value="KRTAP_type_19"/>
</dbReference>
<dbReference type="PANTHER" id="PTHR38140:SF6">
    <property type="entry name" value="KERATIN-ASSOCIATED PROTEIN 19-1"/>
    <property type="match status" value="1"/>
</dbReference>
<dbReference type="PANTHER" id="PTHR38140">
    <property type="entry name" value="KERATIN-ASSOCIATED PROTEIN 19-3-RELATED"/>
    <property type="match status" value="1"/>
</dbReference>
<dbReference type="Pfam" id="PF11759">
    <property type="entry name" value="KRTAP"/>
    <property type="match status" value="1"/>
</dbReference>
<keyword id="KW-0416">Keratin</keyword>
<keyword id="KW-1267">Proteomics identification</keyword>
<keyword id="KW-1185">Reference proteome</keyword>
<keyword id="KW-0677">Repeat</keyword>